<feature type="chain" id="PRO_0000459441" description="Non-specific lipid-transfer protein 3">
    <location>
        <begin position="1"/>
        <end position="25"/>
    </location>
</feature>
<feature type="non-terminal residue" evidence="3">
    <location>
        <position position="25"/>
    </location>
</feature>
<keyword id="KW-0044">Antibiotic</keyword>
<keyword id="KW-0929">Antimicrobial</keyword>
<keyword id="KW-0903">Direct protein sequencing</keyword>
<keyword id="KW-0295">Fungicide</keyword>
<keyword id="KW-0446">Lipid-binding</keyword>
<keyword id="KW-0611">Plant defense</keyword>
<keyword id="KW-0813">Transport</keyword>
<organism>
    <name type="scientific">Nigella sativa</name>
    <name type="common">Black cumin</name>
    <dbReference type="NCBI Taxonomy" id="555479"/>
    <lineage>
        <taxon>Eukaryota</taxon>
        <taxon>Viridiplantae</taxon>
        <taxon>Streptophyta</taxon>
        <taxon>Embryophyta</taxon>
        <taxon>Tracheophyta</taxon>
        <taxon>Spermatophyta</taxon>
        <taxon>Magnoliopsida</taxon>
        <taxon>Ranunculales</taxon>
        <taxon>Ranunculaceae</taxon>
        <taxon>Ranunculoideae</taxon>
        <taxon>Nigelleae</taxon>
        <taxon>Nigella</taxon>
    </lineage>
</organism>
<sequence length="25" mass="2684">KICQDVKQSLAPCLPYVTGRAPKPA</sequence>
<accession>C0HM80</accession>
<comment type="function">
    <text evidence="1 2">Plant non-specific lipid-transfer proteins transfer phospholipids as well as galactolipids across membranes (By similarity). May play a role in wax or cutin deposition in the cell walls of expanding epidermal cells and certain secretory tissues (By similarity). Has antibacterial and antifungal activity (PubMed:37175769). Displays antibacterial activity towards both Gram-negative bacteria, P.carotovorum (IC(50)=11.5 uM) and P.syringae (IC(50)=12.0 uM), and Gram-positive bacterium C.michiganensis subsp michiganense (IC(50)=11.2 uM) (PubMed:37175769). Also displays antifungal activity towards A.niger VKM F-33 (IC(50)=1.05 uM) and B.cinerea TSKHA (IC(50)=1.88 uM) and relatively moderate activity towards B.sorokiniana VKM F-1448 (IC(50)=1.55 uM) (PubMed:37175769). Displays some inhibitory activity towards P.infestans OSV12 (PubMed:37175769).</text>
</comment>
<comment type="tissue specificity">
    <text evidence="2">Seeds (at protein level).</text>
</comment>
<comment type="mass spectrometry" mass="5707.3" error="1.0" method="MALDI" evidence="2"/>
<comment type="similarity">
    <text evidence="4">Belongs to the plant LTP family.</text>
</comment>
<protein>
    <recommendedName>
        <fullName evidence="3">Non-specific lipid-transfer protein 3</fullName>
        <shortName evidence="3">NsLTP3</shortName>
    </recommendedName>
</protein>
<proteinExistence type="evidence at protein level"/>
<reference evidence="4" key="1">
    <citation type="journal article" date="2023" name="Int. J. Mol. Sci.">
        <title>Diversity of Cationic Antimicrobial Peptides in Black Cumin (Nigella sativa L.) Seeds.</title>
        <authorList>
            <person name="Barashkova A.S."/>
            <person name="Smirnov A.N."/>
            <person name="Zorina E.S."/>
            <person name="Rogozhin E.A."/>
        </authorList>
    </citation>
    <scope>PROTEIN SEQUENCE</scope>
    <scope>FUNCTION</scope>
    <scope>TISSUE SPECIFICITY</scope>
    <scope>MASS SPECTROMETRY</scope>
    <source>
        <tissue evidence="3">Seed</tissue>
    </source>
</reference>
<dbReference type="GO" id="GO:0008289">
    <property type="term" value="F:lipid binding"/>
    <property type="evidence" value="ECO:0007669"/>
    <property type="project" value="UniProtKB-KW"/>
</dbReference>
<dbReference type="GO" id="GO:0042742">
    <property type="term" value="P:defense response to bacterium"/>
    <property type="evidence" value="ECO:0007669"/>
    <property type="project" value="UniProtKB-KW"/>
</dbReference>
<dbReference type="GO" id="GO:0050832">
    <property type="term" value="P:defense response to fungus"/>
    <property type="evidence" value="ECO:0007669"/>
    <property type="project" value="UniProtKB-KW"/>
</dbReference>
<dbReference type="GO" id="GO:0031640">
    <property type="term" value="P:killing of cells of another organism"/>
    <property type="evidence" value="ECO:0007669"/>
    <property type="project" value="UniProtKB-KW"/>
</dbReference>
<name>NLTP3_NIGSA</name>
<evidence type="ECO:0000250" key="1">
    <source>
        <dbReference type="UniProtKB" id="P81402"/>
    </source>
</evidence>
<evidence type="ECO:0000269" key="2">
    <source>
    </source>
</evidence>
<evidence type="ECO:0000303" key="3">
    <source>
    </source>
</evidence>
<evidence type="ECO:0000305" key="4"/>